<comment type="function">
    <text evidence="1">Has antibacterial activity.</text>
</comment>
<comment type="subcellular location">
    <subcellularLocation>
        <location evidence="1">Secreted</location>
    </subcellularLocation>
</comment>
<comment type="tissue specificity">
    <text evidence="3">Only expressed in epididymis (corpus and cauda).</text>
</comment>
<comment type="similarity">
    <text evidence="4">Belongs to the beta-defensin family.</text>
</comment>
<accession>Q7TMD2</accession>
<feature type="signal peptide" evidence="2">
    <location>
        <begin position="1"/>
        <end position="16"/>
    </location>
</feature>
<feature type="chain" id="PRO_0000006949" description="Beta-defensin 37">
    <location>
        <begin position="17"/>
        <end position="62"/>
    </location>
</feature>
<feature type="disulfide bond" evidence="1">
    <location>
        <begin position="29"/>
        <end position="58"/>
    </location>
</feature>
<feature type="disulfide bond" evidence="1">
    <location>
        <begin position="36"/>
        <end position="51"/>
    </location>
</feature>
<feature type="disulfide bond" evidence="1">
    <location>
        <begin position="41"/>
        <end position="59"/>
    </location>
</feature>
<evidence type="ECO:0000250" key="1"/>
<evidence type="ECO:0000255" key="2"/>
<evidence type="ECO:0000269" key="3">
    <source>
    </source>
</evidence>
<evidence type="ECO:0000305" key="4"/>
<protein>
    <recommendedName>
        <fullName>Beta-defensin 37</fullName>
        <shortName>BD-37</shortName>
        <shortName>mBD-37</shortName>
    </recommendedName>
    <alternativeName>
        <fullName>Defensin, beta 37</fullName>
    </alternativeName>
</protein>
<gene>
    <name type="primary">Defb37</name>
</gene>
<name>DFB37_MOUSE</name>
<keyword id="KW-0044">Antibiotic</keyword>
<keyword id="KW-0929">Antimicrobial</keyword>
<keyword id="KW-0211">Defensin</keyword>
<keyword id="KW-1015">Disulfide bond</keyword>
<keyword id="KW-1185">Reference proteome</keyword>
<keyword id="KW-0964">Secreted</keyword>
<keyword id="KW-0732">Signal</keyword>
<proteinExistence type="evidence at transcript level"/>
<reference key="1">
    <citation type="journal article" date="2004" name="J. Biol. Chem.">
        <title>Identification on mouse chromosome 8 of new beta-defensin genes with regionally specific expression in the male reproductive organ.</title>
        <authorList>
            <person name="Zaballos A."/>
            <person name="Villares R."/>
            <person name="Albar J.P."/>
            <person name="Martinez-A C."/>
            <person name="Marquez G."/>
        </authorList>
    </citation>
    <scope>NUCLEOTIDE SEQUENCE [MRNA]</scope>
    <scope>TISSUE SPECIFICITY</scope>
    <source>
        <strain>BALB/cJ</strain>
        <tissue>Epididymis</tissue>
    </source>
</reference>
<reference key="2">
    <citation type="submission" date="2003-07" db="EMBL/GenBank/DDBJ databases">
        <title>Amino acid residues subject to positive selection in murine b-defensin antimicrobial peptides.</title>
        <authorList>
            <person name="Maxwell A."/>
            <person name="Dorin J.R."/>
        </authorList>
    </citation>
    <scope>NUCLEOTIDE SEQUENCE [MRNA]</scope>
    <source>
        <strain>C57BL/6J</strain>
    </source>
</reference>
<organism>
    <name type="scientific">Mus musculus</name>
    <name type="common">Mouse</name>
    <dbReference type="NCBI Taxonomy" id="10090"/>
    <lineage>
        <taxon>Eukaryota</taxon>
        <taxon>Metazoa</taxon>
        <taxon>Chordata</taxon>
        <taxon>Craniata</taxon>
        <taxon>Vertebrata</taxon>
        <taxon>Euteleostomi</taxon>
        <taxon>Mammalia</taxon>
        <taxon>Eutheria</taxon>
        <taxon>Euarchontoglires</taxon>
        <taxon>Glires</taxon>
        <taxon>Rodentia</taxon>
        <taxon>Myomorpha</taxon>
        <taxon>Muroidea</taxon>
        <taxon>Muridae</taxon>
        <taxon>Murinae</taxon>
        <taxon>Mus</taxon>
        <taxon>Mus</taxon>
    </lineage>
</organism>
<sequence>MKFSYFLLLLLSLSNFQNNPVAMLDTIACIENKDTCRLKNCPRLHNVVGTCYEGKGKCCHKN</sequence>
<dbReference type="EMBL" id="AJ489588">
    <property type="protein sequence ID" value="CAD33899.1"/>
    <property type="molecule type" value="mRNA"/>
</dbReference>
<dbReference type="EMBL" id="AJ578470">
    <property type="protein sequence ID" value="CAE17667.1"/>
    <property type="molecule type" value="mRNA"/>
</dbReference>
<dbReference type="CCDS" id="CCDS40247.1"/>
<dbReference type="RefSeq" id="NP_859011.1">
    <property type="nucleotide sequence ID" value="NM_181683.3"/>
</dbReference>
<dbReference type="SMR" id="Q7TMD2"/>
<dbReference type="FunCoup" id="Q7TMD2">
    <property type="interactions" value="13"/>
</dbReference>
<dbReference type="STRING" id="10090.ENSMUSP00000067193"/>
<dbReference type="PaxDb" id="10090-ENSMUSP00000067193"/>
<dbReference type="DNASU" id="353320"/>
<dbReference type="Ensembl" id="ENSMUST00000066282.4">
    <property type="protein sequence ID" value="ENSMUSP00000067193.4"/>
    <property type="gene ID" value="ENSMUSG00000053695.4"/>
</dbReference>
<dbReference type="GeneID" id="353320"/>
<dbReference type="KEGG" id="mmu:353320"/>
<dbReference type="UCSC" id="uc009kzz.1">
    <property type="organism name" value="mouse"/>
</dbReference>
<dbReference type="AGR" id="MGI:2672966"/>
<dbReference type="CTD" id="353320"/>
<dbReference type="MGI" id="MGI:2672966">
    <property type="gene designation" value="Defb37"/>
</dbReference>
<dbReference type="VEuPathDB" id="HostDB:ENSMUSG00000053695"/>
<dbReference type="GeneTree" id="ENSGT01110000267485"/>
<dbReference type="HOGENOM" id="CLU_189296_5_1_1"/>
<dbReference type="InParanoid" id="Q7TMD2"/>
<dbReference type="OMA" id="GKGKCCH"/>
<dbReference type="OrthoDB" id="9622366at2759"/>
<dbReference type="PhylomeDB" id="Q7TMD2"/>
<dbReference type="BioGRID-ORCS" id="353320">
    <property type="hits" value="5 hits in 77 CRISPR screens"/>
</dbReference>
<dbReference type="ChiTaRS" id="Defb50">
    <property type="organism name" value="mouse"/>
</dbReference>
<dbReference type="PRO" id="PR:Q7TMD2"/>
<dbReference type="Proteomes" id="UP000000589">
    <property type="component" value="Chromosome 8"/>
</dbReference>
<dbReference type="RNAct" id="Q7TMD2">
    <property type="molecule type" value="protein"/>
</dbReference>
<dbReference type="Bgee" id="ENSMUSG00000053695">
    <property type="expression patterns" value="Expressed in epiblast cell in embryo and 12 other cell types or tissues"/>
</dbReference>
<dbReference type="GO" id="GO:0005576">
    <property type="term" value="C:extracellular region"/>
    <property type="evidence" value="ECO:0007669"/>
    <property type="project" value="UniProtKB-SubCell"/>
</dbReference>
<dbReference type="GO" id="GO:0042742">
    <property type="term" value="P:defense response to bacterium"/>
    <property type="evidence" value="ECO:0007669"/>
    <property type="project" value="UniProtKB-KW"/>
</dbReference>
<dbReference type="Gene3D" id="3.10.360.10">
    <property type="entry name" value="Antimicrobial Peptide, Beta-defensin 2, Chain A"/>
    <property type="match status" value="1"/>
</dbReference>
<dbReference type="InterPro" id="IPR001855">
    <property type="entry name" value="Defensin_beta-like"/>
</dbReference>
<dbReference type="PANTHER" id="PTHR21388:SF12">
    <property type="entry name" value="BETA-DEFENSIN 37"/>
    <property type="match status" value="1"/>
</dbReference>
<dbReference type="PANTHER" id="PTHR21388">
    <property type="entry name" value="BETA-DEFENSIN-RELATED"/>
    <property type="match status" value="1"/>
</dbReference>
<dbReference type="Pfam" id="PF00711">
    <property type="entry name" value="Defensin_beta"/>
    <property type="match status" value="1"/>
</dbReference>
<dbReference type="SUPFAM" id="SSF57392">
    <property type="entry name" value="Defensin-like"/>
    <property type="match status" value="1"/>
</dbReference>